<evidence type="ECO:0000255" key="1">
    <source>
        <dbReference type="HAMAP-Rule" id="MF_00391"/>
    </source>
</evidence>
<evidence type="ECO:0000256" key="2">
    <source>
        <dbReference type="SAM" id="MobiDB-lite"/>
    </source>
</evidence>
<evidence type="ECO:0000305" key="3"/>
<name>RL34_BACC3</name>
<sequence length="44" mass="5170">MKRTYQPNKRKRSKVHGFRSRMSTANGRKVLAARRRKGRKVLSA</sequence>
<organism>
    <name type="scientific">Bacillus cereus (strain 03BB102)</name>
    <dbReference type="NCBI Taxonomy" id="572264"/>
    <lineage>
        <taxon>Bacteria</taxon>
        <taxon>Bacillati</taxon>
        <taxon>Bacillota</taxon>
        <taxon>Bacilli</taxon>
        <taxon>Bacillales</taxon>
        <taxon>Bacillaceae</taxon>
        <taxon>Bacillus</taxon>
        <taxon>Bacillus cereus group</taxon>
    </lineage>
</organism>
<reference key="1">
    <citation type="submission" date="2009-02" db="EMBL/GenBank/DDBJ databases">
        <title>Genome sequence of Bacillus cereus 03BB102.</title>
        <authorList>
            <person name="Dodson R.J."/>
            <person name="Jackson P."/>
            <person name="Munk A.C."/>
            <person name="Brettin T."/>
            <person name="Bruce D."/>
            <person name="Detter C."/>
            <person name="Tapia R."/>
            <person name="Han C."/>
            <person name="Sutton G."/>
            <person name="Sims D."/>
        </authorList>
    </citation>
    <scope>NUCLEOTIDE SEQUENCE [LARGE SCALE GENOMIC DNA]</scope>
    <source>
        <strain>03BB102</strain>
    </source>
</reference>
<protein>
    <recommendedName>
        <fullName evidence="1">Large ribosomal subunit protein bL34</fullName>
    </recommendedName>
    <alternativeName>
        <fullName evidence="3">50S ribosomal protein L34</fullName>
    </alternativeName>
</protein>
<gene>
    <name evidence="1" type="primary">rpmH</name>
    <name type="ordered locus">BCA_5643</name>
</gene>
<comment type="similarity">
    <text evidence="1">Belongs to the bacterial ribosomal protein bL34 family.</text>
</comment>
<dbReference type="EMBL" id="CP001407">
    <property type="protein sequence ID" value="ACO29232.1"/>
    <property type="molecule type" value="Genomic_DNA"/>
</dbReference>
<dbReference type="RefSeq" id="WP_000831901.1">
    <property type="nucleotide sequence ID" value="NZ_CP009318.1"/>
</dbReference>
<dbReference type="SMR" id="C1ER81"/>
<dbReference type="GeneID" id="93005634"/>
<dbReference type="KEGG" id="bcx:BCA_5643"/>
<dbReference type="PATRIC" id="fig|572264.18.peg.65"/>
<dbReference type="Proteomes" id="UP000002210">
    <property type="component" value="Chromosome"/>
</dbReference>
<dbReference type="GO" id="GO:1990904">
    <property type="term" value="C:ribonucleoprotein complex"/>
    <property type="evidence" value="ECO:0007669"/>
    <property type="project" value="UniProtKB-KW"/>
</dbReference>
<dbReference type="GO" id="GO:0005840">
    <property type="term" value="C:ribosome"/>
    <property type="evidence" value="ECO:0007669"/>
    <property type="project" value="UniProtKB-KW"/>
</dbReference>
<dbReference type="GO" id="GO:0003735">
    <property type="term" value="F:structural constituent of ribosome"/>
    <property type="evidence" value="ECO:0007669"/>
    <property type="project" value="InterPro"/>
</dbReference>
<dbReference type="GO" id="GO:0006412">
    <property type="term" value="P:translation"/>
    <property type="evidence" value="ECO:0007669"/>
    <property type="project" value="UniProtKB-UniRule"/>
</dbReference>
<dbReference type="FunFam" id="1.10.287.3980:FF:000001">
    <property type="entry name" value="Mitochondrial ribosomal protein L34"/>
    <property type="match status" value="1"/>
</dbReference>
<dbReference type="Gene3D" id="1.10.287.3980">
    <property type="match status" value="1"/>
</dbReference>
<dbReference type="HAMAP" id="MF_00391">
    <property type="entry name" value="Ribosomal_bL34"/>
    <property type="match status" value="1"/>
</dbReference>
<dbReference type="InterPro" id="IPR000271">
    <property type="entry name" value="Ribosomal_bL34"/>
</dbReference>
<dbReference type="InterPro" id="IPR020939">
    <property type="entry name" value="Ribosomal_bL34_CS"/>
</dbReference>
<dbReference type="NCBIfam" id="TIGR01030">
    <property type="entry name" value="rpmH_bact"/>
    <property type="match status" value="1"/>
</dbReference>
<dbReference type="PANTHER" id="PTHR14503:SF4">
    <property type="entry name" value="LARGE RIBOSOMAL SUBUNIT PROTEIN BL34M"/>
    <property type="match status" value="1"/>
</dbReference>
<dbReference type="PANTHER" id="PTHR14503">
    <property type="entry name" value="MITOCHONDRIAL RIBOSOMAL PROTEIN 34 FAMILY MEMBER"/>
    <property type="match status" value="1"/>
</dbReference>
<dbReference type="Pfam" id="PF00468">
    <property type="entry name" value="Ribosomal_L34"/>
    <property type="match status" value="1"/>
</dbReference>
<dbReference type="PROSITE" id="PS00784">
    <property type="entry name" value="RIBOSOMAL_L34"/>
    <property type="match status" value="1"/>
</dbReference>
<feature type="chain" id="PRO_1000134424" description="Large ribosomal subunit protein bL34">
    <location>
        <begin position="1"/>
        <end position="44"/>
    </location>
</feature>
<feature type="region of interest" description="Disordered" evidence="2">
    <location>
        <begin position="1"/>
        <end position="44"/>
    </location>
</feature>
<feature type="compositionally biased region" description="Basic residues" evidence="2">
    <location>
        <begin position="1"/>
        <end position="19"/>
    </location>
</feature>
<feature type="compositionally biased region" description="Basic residues" evidence="2">
    <location>
        <begin position="31"/>
        <end position="44"/>
    </location>
</feature>
<keyword id="KW-0687">Ribonucleoprotein</keyword>
<keyword id="KW-0689">Ribosomal protein</keyword>
<accession>C1ER81</accession>
<proteinExistence type="inferred from homology"/>